<feature type="chain" id="PRO_0000100013" description="Ribosomal large subunit pseudouridine synthase E">
    <location>
        <begin position="1"/>
        <end position="190"/>
    </location>
</feature>
<feature type="active site" description="Nucleophile" evidence="1">
    <location>
        <position position="42"/>
    </location>
</feature>
<evidence type="ECO:0000250" key="1"/>
<evidence type="ECO:0000305" key="2"/>
<gene>
    <name type="primary">rluE</name>
    <name type="ordered locus">XAC0290</name>
</gene>
<proteinExistence type="inferred from homology"/>
<comment type="function">
    <text evidence="1">Responsible for synthesis of pseudouridine from uracil-2457 in 23S ribosomal RNA.</text>
</comment>
<comment type="catalytic activity">
    <reaction>
        <text>uridine(2457) in 23S rRNA = pseudouridine(2457) in 23S rRNA</text>
        <dbReference type="Rhea" id="RHEA:38871"/>
        <dbReference type="Rhea" id="RHEA-COMP:10091"/>
        <dbReference type="Rhea" id="RHEA-COMP:10092"/>
        <dbReference type="ChEBI" id="CHEBI:65314"/>
        <dbReference type="ChEBI" id="CHEBI:65315"/>
        <dbReference type="EC" id="5.4.99.20"/>
    </reaction>
</comment>
<comment type="similarity">
    <text evidence="2">Belongs to the pseudouridine synthase RsuA family.</text>
</comment>
<comment type="sequence caution" evidence="2">
    <conflict type="erroneous initiation">
        <sequence resource="EMBL-CDS" id="AAM35182"/>
    </conflict>
</comment>
<protein>
    <recommendedName>
        <fullName>Ribosomal large subunit pseudouridine synthase E</fullName>
        <ecNumber>5.4.99.20</ecNumber>
    </recommendedName>
    <alternativeName>
        <fullName>rRNA pseudouridylate synthase E</fullName>
    </alternativeName>
    <alternativeName>
        <fullName>rRNA-uridine isomerase E</fullName>
    </alternativeName>
</protein>
<keyword id="KW-0413">Isomerase</keyword>
<keyword id="KW-0698">rRNA processing</keyword>
<accession>Q8PQN3</accession>
<reference key="1">
    <citation type="journal article" date="2002" name="Nature">
        <title>Comparison of the genomes of two Xanthomonas pathogens with differing host specificities.</title>
        <authorList>
            <person name="da Silva A.C.R."/>
            <person name="Ferro J.A."/>
            <person name="Reinach F.C."/>
            <person name="Farah C.S."/>
            <person name="Furlan L.R."/>
            <person name="Quaggio R.B."/>
            <person name="Monteiro-Vitorello C.B."/>
            <person name="Van Sluys M.A."/>
            <person name="Almeida N.F. Jr."/>
            <person name="Alves L.M.C."/>
            <person name="do Amaral A.M."/>
            <person name="Bertolini M.C."/>
            <person name="Camargo L.E.A."/>
            <person name="Camarotte G."/>
            <person name="Cannavan F."/>
            <person name="Cardozo J."/>
            <person name="Chambergo F."/>
            <person name="Ciapina L.P."/>
            <person name="Cicarelli R.M.B."/>
            <person name="Coutinho L.L."/>
            <person name="Cursino-Santos J.R."/>
            <person name="El-Dorry H."/>
            <person name="Faria J.B."/>
            <person name="Ferreira A.J.S."/>
            <person name="Ferreira R.C.C."/>
            <person name="Ferro M.I.T."/>
            <person name="Formighieri E.F."/>
            <person name="Franco M.C."/>
            <person name="Greggio C.C."/>
            <person name="Gruber A."/>
            <person name="Katsuyama A.M."/>
            <person name="Kishi L.T."/>
            <person name="Leite R.P."/>
            <person name="Lemos E.G.M."/>
            <person name="Lemos M.V.F."/>
            <person name="Locali E.C."/>
            <person name="Machado M.A."/>
            <person name="Madeira A.M.B.N."/>
            <person name="Martinez-Rossi N.M."/>
            <person name="Martins E.C."/>
            <person name="Meidanis J."/>
            <person name="Menck C.F.M."/>
            <person name="Miyaki C.Y."/>
            <person name="Moon D.H."/>
            <person name="Moreira L.M."/>
            <person name="Novo M.T.M."/>
            <person name="Okura V.K."/>
            <person name="Oliveira M.C."/>
            <person name="Oliveira V.R."/>
            <person name="Pereira H.A."/>
            <person name="Rossi A."/>
            <person name="Sena J.A.D."/>
            <person name="Silva C."/>
            <person name="de Souza R.F."/>
            <person name="Spinola L.A.F."/>
            <person name="Takita M.A."/>
            <person name="Tamura R.E."/>
            <person name="Teixeira E.C."/>
            <person name="Tezza R.I.D."/>
            <person name="Trindade dos Santos M."/>
            <person name="Truffi D."/>
            <person name="Tsai S.M."/>
            <person name="White F.F."/>
            <person name="Setubal J.C."/>
            <person name="Kitajima J.P."/>
        </authorList>
    </citation>
    <scope>NUCLEOTIDE SEQUENCE [LARGE SCALE GENOMIC DNA]</scope>
    <source>
        <strain>306</strain>
    </source>
</reference>
<organism>
    <name type="scientific">Xanthomonas axonopodis pv. citri (strain 306)</name>
    <dbReference type="NCBI Taxonomy" id="190486"/>
    <lineage>
        <taxon>Bacteria</taxon>
        <taxon>Pseudomonadati</taxon>
        <taxon>Pseudomonadota</taxon>
        <taxon>Gammaproteobacteria</taxon>
        <taxon>Lysobacterales</taxon>
        <taxon>Lysobacteraceae</taxon>
        <taxon>Xanthomonas</taxon>
    </lineage>
</organism>
<name>RLUE_XANAC</name>
<sequence length="190" mass="21304">MLVLLNKPYGVLSQFSDRSQPPKRTLAEFGLPPDVYAAGRLDHDSEGLLVLTDDGALAHRLTDPRHKQPKTYWVQVEGAPQAEHLQALRDGVALNDGPTRPAQVRMLDPAPQLWPRDPPVRVRKTVPDAWLELQITEGRNRQVRRMTAAVGLPTLRLVRVAIGDWRLDALAPGQWRAEATTNARPSRSRR</sequence>
<dbReference type="EC" id="5.4.99.20"/>
<dbReference type="EMBL" id="AE008923">
    <property type="protein sequence ID" value="AAM35182.1"/>
    <property type="status" value="ALT_INIT"/>
    <property type="molecule type" value="Genomic_DNA"/>
</dbReference>
<dbReference type="RefSeq" id="WP_015462765.1">
    <property type="nucleotide sequence ID" value="NC_003919.1"/>
</dbReference>
<dbReference type="SMR" id="Q8PQN3"/>
<dbReference type="KEGG" id="xac:XAC0290"/>
<dbReference type="eggNOG" id="COG1187">
    <property type="taxonomic scope" value="Bacteria"/>
</dbReference>
<dbReference type="HOGENOM" id="CLU_024979_8_1_6"/>
<dbReference type="Proteomes" id="UP000000576">
    <property type="component" value="Chromosome"/>
</dbReference>
<dbReference type="GO" id="GO:0160137">
    <property type="term" value="F:23S rRNA pseudouridine(2457) synthase activity"/>
    <property type="evidence" value="ECO:0007669"/>
    <property type="project" value="UniProtKB-EC"/>
</dbReference>
<dbReference type="GO" id="GO:0003723">
    <property type="term" value="F:RNA binding"/>
    <property type="evidence" value="ECO:0007669"/>
    <property type="project" value="InterPro"/>
</dbReference>
<dbReference type="GO" id="GO:0001522">
    <property type="term" value="P:pseudouridine synthesis"/>
    <property type="evidence" value="ECO:0007669"/>
    <property type="project" value="InterPro"/>
</dbReference>
<dbReference type="GO" id="GO:0006364">
    <property type="term" value="P:rRNA processing"/>
    <property type="evidence" value="ECO:0007669"/>
    <property type="project" value="UniProtKB-KW"/>
</dbReference>
<dbReference type="Gene3D" id="3.30.70.1560">
    <property type="entry name" value="Alpha-L RNA-binding motif"/>
    <property type="match status" value="1"/>
</dbReference>
<dbReference type="Gene3D" id="3.30.70.580">
    <property type="entry name" value="Pseudouridine synthase I, catalytic domain, N-terminal subdomain"/>
    <property type="match status" value="1"/>
</dbReference>
<dbReference type="InterPro" id="IPR042092">
    <property type="entry name" value="PsdUridine_s_RsuA/RluB/E/F_cat"/>
</dbReference>
<dbReference type="InterPro" id="IPR020103">
    <property type="entry name" value="PsdUridine_synth_cat_dom_sf"/>
</dbReference>
<dbReference type="InterPro" id="IPR006145">
    <property type="entry name" value="PsdUridine_synth_RsuA/RluA"/>
</dbReference>
<dbReference type="InterPro" id="IPR000748">
    <property type="entry name" value="PsdUridine_synth_RsuA/RluB/E/F"/>
</dbReference>
<dbReference type="InterPro" id="IPR018496">
    <property type="entry name" value="PsdUridine_synth_RsuA/RluB_CS"/>
</dbReference>
<dbReference type="InterPro" id="IPR050343">
    <property type="entry name" value="RsuA_PseudoU_synthase"/>
</dbReference>
<dbReference type="InterPro" id="IPR020094">
    <property type="entry name" value="TruA/RsuA/RluB/E/F_N"/>
</dbReference>
<dbReference type="NCBIfam" id="TIGR00093">
    <property type="entry name" value="pseudouridine synthase"/>
    <property type="match status" value="1"/>
</dbReference>
<dbReference type="PANTHER" id="PTHR47683">
    <property type="entry name" value="PSEUDOURIDINE SYNTHASE FAMILY PROTEIN-RELATED"/>
    <property type="match status" value="1"/>
</dbReference>
<dbReference type="PANTHER" id="PTHR47683:SF2">
    <property type="entry name" value="RNA-BINDING S4 DOMAIN-CONTAINING PROTEIN"/>
    <property type="match status" value="1"/>
</dbReference>
<dbReference type="Pfam" id="PF00849">
    <property type="entry name" value="PseudoU_synth_2"/>
    <property type="match status" value="1"/>
</dbReference>
<dbReference type="SUPFAM" id="SSF55120">
    <property type="entry name" value="Pseudouridine synthase"/>
    <property type="match status" value="1"/>
</dbReference>
<dbReference type="PROSITE" id="PS01149">
    <property type="entry name" value="PSI_RSU"/>
    <property type="match status" value="1"/>
</dbReference>